<gene>
    <name type="primary">mrpA</name>
    <name type="ordered locus">BpOF4_13210</name>
</gene>
<dbReference type="EMBL" id="AF097740">
    <property type="protein sequence ID" value="AAF21812.2"/>
    <property type="molecule type" value="Genomic_DNA"/>
</dbReference>
<dbReference type="EMBL" id="CP001878">
    <property type="protein sequence ID" value="ADC50693.1"/>
    <property type="molecule type" value="Genomic_DNA"/>
</dbReference>
<dbReference type="RefSeq" id="WP_012958056.1">
    <property type="nucleotide sequence ID" value="NC_013791.2"/>
</dbReference>
<dbReference type="SMR" id="Q9RGZ5"/>
<dbReference type="STRING" id="398511.BpOF4_13210"/>
<dbReference type="KEGG" id="bpf:BpOF4_13210"/>
<dbReference type="eggNOG" id="COG1009">
    <property type="taxonomic scope" value="Bacteria"/>
</dbReference>
<dbReference type="eggNOG" id="COG2111">
    <property type="taxonomic scope" value="Bacteria"/>
</dbReference>
<dbReference type="HOGENOM" id="CLU_007100_2_1_9"/>
<dbReference type="Proteomes" id="UP000001544">
    <property type="component" value="Chromosome"/>
</dbReference>
<dbReference type="GO" id="GO:0005886">
    <property type="term" value="C:plasma membrane"/>
    <property type="evidence" value="ECO:0007669"/>
    <property type="project" value="UniProtKB-SubCell"/>
</dbReference>
<dbReference type="GO" id="GO:0015297">
    <property type="term" value="F:antiporter activity"/>
    <property type="evidence" value="ECO:0007669"/>
    <property type="project" value="UniProtKB-KW"/>
</dbReference>
<dbReference type="GO" id="GO:1902600">
    <property type="term" value="P:proton transmembrane transport"/>
    <property type="evidence" value="ECO:0007669"/>
    <property type="project" value="UniProtKB-KW"/>
</dbReference>
<dbReference type="GO" id="GO:0006814">
    <property type="term" value="P:sodium ion transport"/>
    <property type="evidence" value="ECO:0007669"/>
    <property type="project" value="UniProtKB-KW"/>
</dbReference>
<dbReference type="InterPro" id="IPR050616">
    <property type="entry name" value="CPA3_Na-H_Antiporter_A"/>
</dbReference>
<dbReference type="InterPro" id="IPR005663">
    <property type="entry name" value="MrpA/MnhA1/PhaAB"/>
</dbReference>
<dbReference type="InterPro" id="IPR025383">
    <property type="entry name" value="MrpA_C/MbhD"/>
</dbReference>
<dbReference type="InterPro" id="IPR046806">
    <property type="entry name" value="MrpA_C/MbhE"/>
</dbReference>
<dbReference type="InterPro" id="IPR001750">
    <property type="entry name" value="ND/Mrp_TM"/>
</dbReference>
<dbReference type="InterPro" id="IPR001516">
    <property type="entry name" value="Proton_antipo_N"/>
</dbReference>
<dbReference type="NCBIfam" id="TIGR00940">
    <property type="entry name" value="2a6301s01"/>
    <property type="match status" value="1"/>
</dbReference>
<dbReference type="NCBIfam" id="NF009285">
    <property type="entry name" value="PRK12645.1"/>
    <property type="match status" value="1"/>
</dbReference>
<dbReference type="PANTHER" id="PTHR43373">
    <property type="entry name" value="NA(+)/H(+) ANTIPORTER SUBUNIT"/>
    <property type="match status" value="1"/>
</dbReference>
<dbReference type="PANTHER" id="PTHR43373:SF1">
    <property type="entry name" value="NA(+)_H(+) ANTIPORTER SUBUNIT A"/>
    <property type="match status" value="1"/>
</dbReference>
<dbReference type="Pfam" id="PF13244">
    <property type="entry name" value="MbhD"/>
    <property type="match status" value="1"/>
</dbReference>
<dbReference type="Pfam" id="PF20501">
    <property type="entry name" value="MbhE"/>
    <property type="match status" value="1"/>
</dbReference>
<dbReference type="Pfam" id="PF00361">
    <property type="entry name" value="Proton_antipo_M"/>
    <property type="match status" value="1"/>
</dbReference>
<dbReference type="Pfam" id="PF00662">
    <property type="entry name" value="Proton_antipo_N"/>
    <property type="match status" value="1"/>
</dbReference>
<dbReference type="PRINTS" id="PR01434">
    <property type="entry name" value="NADHDHGNASE5"/>
</dbReference>
<keyword id="KW-0050">Antiport</keyword>
<keyword id="KW-1003">Cell membrane</keyword>
<keyword id="KW-0375">Hydrogen ion transport</keyword>
<keyword id="KW-0406">Ion transport</keyword>
<keyword id="KW-0472">Membrane</keyword>
<keyword id="KW-1185">Reference proteome</keyword>
<keyword id="KW-0915">Sodium</keyword>
<keyword id="KW-0739">Sodium transport</keyword>
<keyword id="KW-0812">Transmembrane</keyword>
<keyword id="KW-1133">Transmembrane helix</keyword>
<keyword id="KW-0813">Transport</keyword>
<comment type="function">
    <text>Mnh complex is a Na(+)Li(+)/H(+) antiporter involved in Na(+) and/or Li(+) excretion and Na(+) resistance. Na(+)/H(+) antiport consumes a transmembrane electrical potential, and is thus inferred to be electrogenic. Does not transport K(+), Ca(2+) or Mg(2+).</text>
</comment>
<comment type="subunit">
    <text evidence="1">Forms a heterooligomeric complex that consists of seven subunits: MrpA, MrpB, MrpC, MrpD, MrpE, MrpF and MrpG.</text>
</comment>
<comment type="subcellular location">
    <subcellularLocation>
        <location evidence="1">Cell membrane</location>
        <topology evidence="1">Multi-pass membrane protein</topology>
    </subcellularLocation>
</comment>
<comment type="miscellaneous">
    <text>Mrp-dependent antiport apparently occurs by a secondary, proton motive force-dependent mechanism, but the similarity of several Mrp proteins to membrane-embedded subunits of energy-coupled NADH dehydrogenase complexes raises the possibility that there is a capacity for electron transport that could provide a primary energy coupling option for Mrp functions.</text>
</comment>
<comment type="similarity">
    <text evidence="3">Belongs to the CPA3 antiporters (TC 2.A.63) subunit A family.</text>
</comment>
<sequence length="805" mass="89397">MTVLHWATISPFLLAILIPFLYKYARRIHTGWFVLVLPLVLFIYFIQYLSITSTGGVVEHTIPWVPSLGINFTVFVDGLSLLFALLITGIGTLVILYSIFYLSKKTESLNNFYVYLLMFMGAMLGVVLSDNLIVLYVFWELTSLASSLLISYWFHREKSTYGAQKSMLITVFGGFAMLGGFSLLYVMTGTFSIRGIIENVDLVTSSELFLPAMILVLLGAFTKSAQFPFHIWLPDAMEAPTPVSAYLHSATMVKAGIYLVARLTPVFAGSAEWFWLLTGFGVVTLLWGSTSAVRQKDLKGILAFSTVSQLGLIMTLLGLGSAAIYFGESVDPAFYSFAIMAAIFHLINHATFKGSLFMTAGIIDHETGTRDIRKLGGLMAIMPVTFTVSLIGLASMAGLPPFNGFLSKEMFFTALLRATEMNAFNMETFGIIIVVLAWIASVFTFLYCLIMFFKTFTGKFKPENYDVKVHEAPIGMLISPVILGSLVIVFGFFPNILAYTIIEPAMQAVLPTVLADGELFHVNIYMWHGFNAELFMTMGVVAAGIILFLMMKNWAKAAFYMKERDPLNWFYDSSLSGVITGSQFVTRIQMTGLLRDYFAYMIVFMILLLGYTMFRYDAFAIDTTNVTEIAPYIWVITIVFIVATLSIPFINKRITAVVVVGVIGFLLALLFVVFRAPDLALTQLLIETVTVLLLMLAFYHLPELRKEEFKPRFNVLNLIISIGVGFFITAIALSSLALGNEAGIEPISQFFIENSKELAGGYNMVNVILVDFRGLDTMLEVLVLGIAALGVIALIKLRMTGREDV</sequence>
<proteinExistence type="evidence at protein level"/>
<protein>
    <recommendedName>
        <fullName>Na(+)/H(+) antiporter subunit A</fullName>
    </recommendedName>
    <alternativeName>
        <fullName>Mrp complex subunit A</fullName>
    </alternativeName>
    <alternativeName>
        <fullName>Multiple resistance and pH homeostasis protein A</fullName>
    </alternativeName>
</protein>
<feature type="chain" id="PRO_0000217073" description="Na(+)/H(+) antiporter subunit A">
    <location>
        <begin position="1"/>
        <end position="805"/>
    </location>
</feature>
<feature type="transmembrane region" description="Helical" evidence="2">
    <location>
        <begin position="4"/>
        <end position="22"/>
    </location>
</feature>
<feature type="transmembrane region" description="Helical" evidence="2">
    <location>
        <begin position="29"/>
        <end position="51"/>
    </location>
</feature>
<feature type="transmembrane region" description="Helical" evidence="2">
    <location>
        <begin position="80"/>
        <end position="102"/>
    </location>
</feature>
<feature type="transmembrane region" description="Helical" evidence="2">
    <location>
        <begin position="109"/>
        <end position="128"/>
    </location>
</feature>
<feature type="transmembrane region" description="Helical" evidence="2">
    <location>
        <begin position="132"/>
        <end position="154"/>
    </location>
</feature>
<feature type="transmembrane region" description="Helical" evidence="2">
    <location>
        <begin position="167"/>
        <end position="189"/>
    </location>
</feature>
<feature type="transmembrane region" description="Helical" evidence="2">
    <location>
        <begin position="209"/>
        <end position="231"/>
    </location>
</feature>
<feature type="transmembrane region" description="Helical" evidence="2">
    <location>
        <begin position="244"/>
        <end position="266"/>
    </location>
</feature>
<feature type="transmembrane region" description="Helical" evidence="2">
    <location>
        <begin position="271"/>
        <end position="293"/>
    </location>
</feature>
<feature type="transmembrane region" description="Helical" evidence="2">
    <location>
        <begin position="300"/>
        <end position="322"/>
    </location>
</feature>
<feature type="transmembrane region" description="Helical" evidence="2">
    <location>
        <begin position="332"/>
        <end position="354"/>
    </location>
</feature>
<feature type="transmembrane region" description="Helical" evidence="2">
    <location>
        <begin position="375"/>
        <end position="397"/>
    </location>
</feature>
<feature type="transmembrane region" description="Helical" evidence="2">
    <location>
        <begin position="431"/>
        <end position="453"/>
    </location>
</feature>
<feature type="transmembrane region" description="Helical" evidence="2">
    <location>
        <begin position="474"/>
        <end position="496"/>
    </location>
</feature>
<feature type="transmembrane region" description="Helical" evidence="2">
    <location>
        <begin position="529"/>
        <end position="551"/>
    </location>
</feature>
<feature type="transmembrane region" description="Helical" evidence="2">
    <location>
        <begin position="597"/>
        <end position="614"/>
    </location>
</feature>
<feature type="transmembrane region" description="Helical" evidence="2">
    <location>
        <begin position="629"/>
        <end position="651"/>
    </location>
</feature>
<feature type="transmembrane region" description="Helical" evidence="2">
    <location>
        <begin position="656"/>
        <end position="674"/>
    </location>
</feature>
<feature type="transmembrane region" description="Helical" evidence="2">
    <location>
        <begin position="679"/>
        <end position="701"/>
    </location>
</feature>
<feature type="transmembrane region" description="Helical" evidence="2">
    <location>
        <begin position="714"/>
        <end position="736"/>
    </location>
</feature>
<feature type="transmembrane region" description="Helical" evidence="2">
    <location>
        <begin position="778"/>
        <end position="795"/>
    </location>
</feature>
<accession>Q9RGZ5</accession>
<accession>D3FXI2</accession>
<name>MRPA_ALKPO</name>
<reference key="1">
    <citation type="journal article" date="2001" name="FEBS Lett.">
        <title>Mrp-dependent Na(+)/H(+) antiporters of Bacillus exhibit characteristics that are unanticipated for completely secondary active transporters.</title>
        <authorList>
            <person name="Ito M."/>
            <person name="Guffanti A.A."/>
            <person name="Krulwich T.A."/>
        </authorList>
    </citation>
    <scope>NUCLEOTIDE SEQUENCE [GENOMIC DNA]</scope>
    <scope>CHARACTERIZATION</scope>
</reference>
<reference key="2">
    <citation type="submission" date="2003-10" db="EMBL/GenBank/DDBJ databases">
        <authorList>
            <person name="Krulwich T.A."/>
        </authorList>
    </citation>
    <scope>SEQUENCE REVISION TO 15 AND 331</scope>
</reference>
<reference key="3">
    <citation type="journal article" date="2011" name="Environ. Microbiol.">
        <title>Genome of alkaliphilic Bacillus pseudofirmus OF4 reveals adaptations that support the ability to grow in an external pH range from 7.5 to 11.4.</title>
        <authorList>
            <person name="Janto B."/>
            <person name="Ahmed A."/>
            <person name="Ito M."/>
            <person name="Liu J."/>
            <person name="Hicks D.B."/>
            <person name="Pagni S."/>
            <person name="Fackelmayer O.J."/>
            <person name="Smith T.A."/>
            <person name="Earl J."/>
            <person name="Elbourne L.D."/>
            <person name="Hassan K."/>
            <person name="Paulsen I.T."/>
            <person name="Kolsto A.B."/>
            <person name="Tourasse N.J."/>
            <person name="Ehrlich G.D."/>
            <person name="Boissy R."/>
            <person name="Ivey D.M."/>
            <person name="Li G."/>
            <person name="Xue Y."/>
            <person name="Ma Y."/>
            <person name="Hu F.Z."/>
            <person name="Krulwich T.A."/>
        </authorList>
    </citation>
    <scope>NUCLEOTIDE SEQUENCE [LARGE SCALE GENOMIC DNA]</scope>
    <source>
        <strain>ATCC BAA-2126 / JCM 17055 / OF4</strain>
    </source>
</reference>
<reference key="4">
    <citation type="journal article" date="2007" name="J. Bacteriol.">
        <title>Catalytic properties of Staphylococcus aureus and Bacillus members of the secondary cation/proton antiporter-3 (Mrp) family are revealed by an optimized assay in an Escherichia coli host.</title>
        <authorList>
            <person name="Swartz T.H."/>
            <person name="Ito M."/>
            <person name="Ohira T."/>
            <person name="Natsui S."/>
            <person name="Hicks D.B."/>
            <person name="Krulwich T.A."/>
        </authorList>
    </citation>
    <scope>CHARACTERIZATION</scope>
    <scope>PROBABLE FUNCTION IN ELECTROGENIC ANTIPORTER ACTIVITY</scope>
</reference>
<organism>
    <name type="scientific">Alkalihalophilus pseudofirmus (strain ATCC BAA-2126 / JCM 17055 / OF4)</name>
    <name type="common">Bacillus pseudofirmus</name>
    <dbReference type="NCBI Taxonomy" id="398511"/>
    <lineage>
        <taxon>Bacteria</taxon>
        <taxon>Bacillati</taxon>
        <taxon>Bacillota</taxon>
        <taxon>Bacilli</taxon>
        <taxon>Bacillales</taxon>
        <taxon>Bacillaceae</taxon>
        <taxon>Alkalihalophilus</taxon>
    </lineage>
</organism>
<evidence type="ECO:0000250" key="1"/>
<evidence type="ECO:0000255" key="2"/>
<evidence type="ECO:0000305" key="3"/>